<evidence type="ECO:0000255" key="1">
    <source>
        <dbReference type="HAMAP-Rule" id="MF_01371"/>
    </source>
</evidence>
<evidence type="ECO:0000305" key="2"/>
<dbReference type="EMBL" id="CP000744">
    <property type="protein sequence ID" value="ABR82527.1"/>
    <property type="molecule type" value="Genomic_DNA"/>
</dbReference>
<dbReference type="RefSeq" id="WP_003093696.1">
    <property type="nucleotide sequence ID" value="NC_009656.1"/>
</dbReference>
<dbReference type="SMR" id="A6UZK6"/>
<dbReference type="GeneID" id="77219216"/>
<dbReference type="KEGG" id="pap:PSPA7_0855"/>
<dbReference type="HOGENOM" id="CLU_131047_1_4_6"/>
<dbReference type="Proteomes" id="UP000001582">
    <property type="component" value="Chromosome"/>
</dbReference>
<dbReference type="GO" id="GO:0022625">
    <property type="term" value="C:cytosolic large ribosomal subunit"/>
    <property type="evidence" value="ECO:0007669"/>
    <property type="project" value="TreeGrafter"/>
</dbReference>
<dbReference type="GO" id="GO:0003735">
    <property type="term" value="F:structural constituent of ribosome"/>
    <property type="evidence" value="ECO:0007669"/>
    <property type="project" value="InterPro"/>
</dbReference>
<dbReference type="GO" id="GO:0006412">
    <property type="term" value="P:translation"/>
    <property type="evidence" value="ECO:0007669"/>
    <property type="project" value="UniProtKB-UniRule"/>
</dbReference>
<dbReference type="CDD" id="cd01658">
    <property type="entry name" value="Ribosomal_L30"/>
    <property type="match status" value="1"/>
</dbReference>
<dbReference type="FunFam" id="3.30.1390.20:FF:000001">
    <property type="entry name" value="50S ribosomal protein L30"/>
    <property type="match status" value="1"/>
</dbReference>
<dbReference type="Gene3D" id="3.30.1390.20">
    <property type="entry name" value="Ribosomal protein L30, ferredoxin-like fold domain"/>
    <property type="match status" value="1"/>
</dbReference>
<dbReference type="HAMAP" id="MF_01371_B">
    <property type="entry name" value="Ribosomal_uL30_B"/>
    <property type="match status" value="1"/>
</dbReference>
<dbReference type="InterPro" id="IPR036919">
    <property type="entry name" value="Ribo_uL30_ferredoxin-like_sf"/>
</dbReference>
<dbReference type="InterPro" id="IPR005996">
    <property type="entry name" value="Ribosomal_uL30_bac-type"/>
</dbReference>
<dbReference type="InterPro" id="IPR016082">
    <property type="entry name" value="Ribosomal_uL30_ferredoxin-like"/>
</dbReference>
<dbReference type="NCBIfam" id="TIGR01308">
    <property type="entry name" value="rpmD_bact"/>
    <property type="match status" value="1"/>
</dbReference>
<dbReference type="PANTHER" id="PTHR15892:SF2">
    <property type="entry name" value="LARGE RIBOSOMAL SUBUNIT PROTEIN UL30M"/>
    <property type="match status" value="1"/>
</dbReference>
<dbReference type="PANTHER" id="PTHR15892">
    <property type="entry name" value="MITOCHONDRIAL RIBOSOMAL PROTEIN L30"/>
    <property type="match status" value="1"/>
</dbReference>
<dbReference type="Pfam" id="PF00327">
    <property type="entry name" value="Ribosomal_L30"/>
    <property type="match status" value="1"/>
</dbReference>
<dbReference type="PIRSF" id="PIRSF002211">
    <property type="entry name" value="Ribosomal_L30_bac-type"/>
    <property type="match status" value="1"/>
</dbReference>
<dbReference type="SUPFAM" id="SSF55129">
    <property type="entry name" value="Ribosomal protein L30p/L7e"/>
    <property type="match status" value="1"/>
</dbReference>
<keyword id="KW-0687">Ribonucleoprotein</keyword>
<keyword id="KW-0689">Ribosomal protein</keyword>
<gene>
    <name evidence="1" type="primary">rpmD</name>
    <name type="ordered locus">PSPA7_0855</name>
</gene>
<accession>A6UZK6</accession>
<sequence length="58" mass="6478">MATVKVTLVKSLNGRLANHKACVKGLGLRRINHTVEVQDTPENRGMINKAYYLLRVEG</sequence>
<protein>
    <recommendedName>
        <fullName evidence="1">Large ribosomal subunit protein uL30</fullName>
    </recommendedName>
    <alternativeName>
        <fullName evidence="2">50S ribosomal protein L30</fullName>
    </alternativeName>
</protein>
<comment type="subunit">
    <text evidence="1">Part of the 50S ribosomal subunit.</text>
</comment>
<comment type="similarity">
    <text evidence="1">Belongs to the universal ribosomal protein uL30 family.</text>
</comment>
<feature type="chain" id="PRO_1000056092" description="Large ribosomal subunit protein uL30">
    <location>
        <begin position="1"/>
        <end position="58"/>
    </location>
</feature>
<proteinExistence type="inferred from homology"/>
<organism>
    <name type="scientific">Pseudomonas paraeruginosa (strain DSM 24068 / PA7)</name>
    <name type="common">Pseudomonas aeruginosa (strain PA7)</name>
    <dbReference type="NCBI Taxonomy" id="381754"/>
    <lineage>
        <taxon>Bacteria</taxon>
        <taxon>Pseudomonadati</taxon>
        <taxon>Pseudomonadota</taxon>
        <taxon>Gammaproteobacteria</taxon>
        <taxon>Pseudomonadales</taxon>
        <taxon>Pseudomonadaceae</taxon>
        <taxon>Pseudomonas</taxon>
        <taxon>Pseudomonas paraeruginosa</taxon>
    </lineage>
</organism>
<reference key="1">
    <citation type="submission" date="2007-06" db="EMBL/GenBank/DDBJ databases">
        <authorList>
            <person name="Dodson R.J."/>
            <person name="Harkins D."/>
            <person name="Paulsen I.T."/>
        </authorList>
    </citation>
    <scope>NUCLEOTIDE SEQUENCE [LARGE SCALE GENOMIC DNA]</scope>
    <source>
        <strain>DSM 24068 / PA7</strain>
    </source>
</reference>
<name>RL30_PSEP7</name>